<dbReference type="EMBL" id="BC068861">
    <property type="protein sequence ID" value="AAH68861.1"/>
    <property type="molecule type" value="mRNA"/>
</dbReference>
<dbReference type="RefSeq" id="NP_001084733.1">
    <property type="nucleotide sequence ID" value="NM_001091264.1"/>
</dbReference>
<dbReference type="SMR" id="Q6NTU3"/>
<dbReference type="DNASU" id="414698"/>
<dbReference type="GeneID" id="414698"/>
<dbReference type="KEGG" id="xla:414698"/>
<dbReference type="AGR" id="Xenbase:XB-GENE-6252269"/>
<dbReference type="CTD" id="414698"/>
<dbReference type="Xenbase" id="XB-GENE-6252269">
    <property type="gene designation" value="pam16.L"/>
</dbReference>
<dbReference type="OMA" id="RMFKIND"/>
<dbReference type="OrthoDB" id="10262892at2759"/>
<dbReference type="Proteomes" id="UP000186698">
    <property type="component" value="Chromosome 9_10L"/>
</dbReference>
<dbReference type="Bgee" id="414698">
    <property type="expression patterns" value="Expressed in muscle tissue and 19 other cell types or tissues"/>
</dbReference>
<dbReference type="GO" id="GO:0005744">
    <property type="term" value="C:TIM23 mitochondrial import inner membrane translocase complex"/>
    <property type="evidence" value="ECO:0000318"/>
    <property type="project" value="GO_Central"/>
</dbReference>
<dbReference type="GO" id="GO:0030150">
    <property type="term" value="P:protein import into mitochondrial matrix"/>
    <property type="evidence" value="ECO:0000318"/>
    <property type="project" value="GO_Central"/>
</dbReference>
<dbReference type="FunFam" id="1.10.287.110:FF:000006">
    <property type="entry name" value="Import inner membrane translocase subunit TIM16"/>
    <property type="match status" value="1"/>
</dbReference>
<dbReference type="Gene3D" id="1.10.287.110">
    <property type="entry name" value="DnaJ domain"/>
    <property type="match status" value="1"/>
</dbReference>
<dbReference type="InterPro" id="IPR036869">
    <property type="entry name" value="J_dom_sf"/>
</dbReference>
<dbReference type="InterPro" id="IPR005341">
    <property type="entry name" value="Tim16"/>
</dbReference>
<dbReference type="PANTHER" id="PTHR12388">
    <property type="entry name" value="MITOCHONDRIA ASSOCIATED GRANULOCYTE MACROPHAGE CSF SIGNALING MOLECULE"/>
    <property type="match status" value="1"/>
</dbReference>
<dbReference type="PANTHER" id="PTHR12388:SF0">
    <property type="entry name" value="MITOCHONDRIAL IMPORT INNER MEMBRANE TRANSLOCASE SUBUNIT TIM16"/>
    <property type="match status" value="1"/>
</dbReference>
<dbReference type="Pfam" id="PF03656">
    <property type="entry name" value="Pam16"/>
    <property type="match status" value="1"/>
</dbReference>
<accession>Q6NTU3</accession>
<keyword id="KW-0472">Membrane</keyword>
<keyword id="KW-0496">Mitochondrion</keyword>
<keyword id="KW-0999">Mitochondrion inner membrane</keyword>
<keyword id="KW-0653">Protein transport</keyword>
<keyword id="KW-1185">Reference proteome</keyword>
<keyword id="KW-0811">Translocation</keyword>
<keyword id="KW-0813">Transport</keyword>
<gene>
    <name type="primary">pam16-a</name>
    <name type="synonym">tim16-a</name>
    <name type="synonym">timm16-a</name>
</gene>
<feature type="chain" id="PRO_0000214082" description="Mitochondrial import inner membrane translocase subunit tim16-A">
    <location>
        <begin position="1"/>
        <end position="125"/>
    </location>
</feature>
<feature type="region of interest" description="J-like">
    <location>
        <begin position="58"/>
        <end position="110"/>
    </location>
</feature>
<sequence length="125" mass="13843">MAKYLAQIVVMGMQVVGRAFTRALRQEFAASKVAAEARGRAGTESAAVSSLSGISLQEAQQILNVSKLTPEEIQKNYEHLFKVNDKGLGGSFYLQSKVVRAKERLDQEMEIQSKTHKPKEETTQT</sequence>
<evidence type="ECO:0000250" key="1"/>
<evidence type="ECO:0000305" key="2"/>
<name>TI16A_XENLA</name>
<protein>
    <recommendedName>
        <fullName>Mitochondrial import inner membrane translocase subunit tim16-A</fullName>
    </recommendedName>
    <alternativeName>
        <fullName>Presequence translocated-associated motor subunit pam16-A</fullName>
    </alternativeName>
</protein>
<comment type="function">
    <text evidence="1">Regulates ATP-dependent protein translocation into the mitochondrial matrix.</text>
</comment>
<comment type="subunit">
    <text evidence="1">Probable component of the PAM complex at least composed of 1 mitochondrial HSP70 protein, 1 GRPE, 1 TIMM44, 1 TIMM16/PAM16 and 1 TIMM14. Associates with the TIM23 complex.</text>
</comment>
<comment type="subcellular location">
    <subcellularLocation>
        <location evidence="1">Mitochondrion inner membrane</location>
        <topology evidence="1">Peripheral membrane protein</topology>
        <orientation evidence="1">Matrix side</orientation>
    </subcellularLocation>
</comment>
<comment type="domain">
    <text evidence="1">The J-like region, although related to the J domain does not have co-chaperone activity.</text>
</comment>
<comment type="similarity">
    <text evidence="2">Belongs to the TIM16/PAM16 family.</text>
</comment>
<proteinExistence type="evidence at transcript level"/>
<organism>
    <name type="scientific">Xenopus laevis</name>
    <name type="common">African clawed frog</name>
    <dbReference type="NCBI Taxonomy" id="8355"/>
    <lineage>
        <taxon>Eukaryota</taxon>
        <taxon>Metazoa</taxon>
        <taxon>Chordata</taxon>
        <taxon>Craniata</taxon>
        <taxon>Vertebrata</taxon>
        <taxon>Euteleostomi</taxon>
        <taxon>Amphibia</taxon>
        <taxon>Batrachia</taxon>
        <taxon>Anura</taxon>
        <taxon>Pipoidea</taxon>
        <taxon>Pipidae</taxon>
        <taxon>Xenopodinae</taxon>
        <taxon>Xenopus</taxon>
        <taxon>Xenopus</taxon>
    </lineage>
</organism>
<reference key="1">
    <citation type="submission" date="2004-04" db="EMBL/GenBank/DDBJ databases">
        <authorList>
            <consortium name="NIH - Xenopus Gene Collection (XGC) project"/>
        </authorList>
    </citation>
    <scope>NUCLEOTIDE SEQUENCE [LARGE SCALE MRNA]</scope>
    <source>
        <tissue>Kidney</tissue>
    </source>
</reference>